<organism>
    <name type="scientific">Rattus norvegicus</name>
    <name type="common">Rat</name>
    <dbReference type="NCBI Taxonomy" id="10116"/>
    <lineage>
        <taxon>Eukaryota</taxon>
        <taxon>Metazoa</taxon>
        <taxon>Chordata</taxon>
        <taxon>Craniata</taxon>
        <taxon>Vertebrata</taxon>
        <taxon>Euteleostomi</taxon>
        <taxon>Mammalia</taxon>
        <taxon>Eutheria</taxon>
        <taxon>Euarchontoglires</taxon>
        <taxon>Glires</taxon>
        <taxon>Rodentia</taxon>
        <taxon>Myomorpha</taxon>
        <taxon>Muroidea</taxon>
        <taxon>Muridae</taxon>
        <taxon>Murinae</taxon>
        <taxon>Rattus</taxon>
    </lineage>
</organism>
<dbReference type="RefSeq" id="NP_001363864.1">
    <property type="nucleotide sequence ID" value="NM_001376935.1"/>
</dbReference>
<dbReference type="RefSeq" id="XP_001072957.3">
    <property type="nucleotide sequence ID" value="XM_001072957.6"/>
</dbReference>
<dbReference type="RefSeq" id="XP_006225179.1">
    <property type="nucleotide sequence ID" value="XM_006225117.3"/>
</dbReference>
<dbReference type="RefSeq" id="XP_006237645.1">
    <property type="nucleotide sequence ID" value="XM_006237583.3"/>
</dbReference>
<dbReference type="RefSeq" id="XP_008761674.1">
    <property type="nucleotide sequence ID" value="XM_008763452.2"/>
</dbReference>
<dbReference type="RefSeq" id="XP_017458375.1">
    <property type="nucleotide sequence ID" value="XM_017602886.1"/>
</dbReference>
<dbReference type="RefSeq" id="XP_017458376.1">
    <property type="nucleotide sequence ID" value="XM_017602887.1"/>
</dbReference>
<dbReference type="RefSeq" id="XP_063142228.1">
    <property type="nucleotide sequence ID" value="XM_063286158.1"/>
</dbReference>
<dbReference type="RefSeq" id="XP_063142229.1">
    <property type="nucleotide sequence ID" value="XM_063286159.1"/>
</dbReference>
<dbReference type="RefSeq" id="XP_063142230.1">
    <property type="nucleotide sequence ID" value="XM_063286160.1"/>
</dbReference>
<dbReference type="RefSeq" id="XP_063142231.1">
    <property type="nucleotide sequence ID" value="XM_063286161.1"/>
</dbReference>
<dbReference type="RefSeq" id="XP_063142234.1">
    <property type="nucleotide sequence ID" value="XM_063286164.1"/>
</dbReference>
<dbReference type="RefSeq" id="XP_232499.6">
    <property type="nucleotide sequence ID" value="XM_232499.9"/>
</dbReference>
<dbReference type="SMR" id="F1M3L7"/>
<dbReference type="FunCoup" id="F1M3L7">
    <property type="interactions" value="1737"/>
</dbReference>
<dbReference type="IntAct" id="F1M3L7">
    <property type="interactions" value="1"/>
</dbReference>
<dbReference type="STRING" id="10116.ENSRNOP00000009328"/>
<dbReference type="GlyGen" id="F1M3L7">
    <property type="glycosylation" value="1 site"/>
</dbReference>
<dbReference type="iPTMnet" id="F1M3L7"/>
<dbReference type="PhosphoSitePlus" id="F1M3L7"/>
<dbReference type="PaxDb" id="10116-ENSRNOP00000009328"/>
<dbReference type="GeneID" id="312812"/>
<dbReference type="UCSC" id="RGD:1310590">
    <property type="organism name" value="rat"/>
</dbReference>
<dbReference type="AGR" id="RGD:1310590"/>
<dbReference type="RGD" id="1310590">
    <property type="gene designation" value="Eps8"/>
</dbReference>
<dbReference type="VEuPathDB" id="HostDB:ENSRNOG00000007047"/>
<dbReference type="eggNOG" id="KOG3557">
    <property type="taxonomic scope" value="Eukaryota"/>
</dbReference>
<dbReference type="HOGENOM" id="CLU_014510_0_0_1"/>
<dbReference type="InParanoid" id="F1M3L7"/>
<dbReference type="TreeFam" id="TF313069"/>
<dbReference type="PRO" id="PR:F1M3L7"/>
<dbReference type="Proteomes" id="UP000002494">
    <property type="component" value="Chromosome 4"/>
</dbReference>
<dbReference type="Bgee" id="ENSRNOG00000007047">
    <property type="expression patterns" value="Expressed in adult mammalian kidney and 18 other cell types or tissues"/>
</dbReference>
<dbReference type="GO" id="GO:0005903">
    <property type="term" value="C:brush border"/>
    <property type="evidence" value="ECO:0000266"/>
    <property type="project" value="RGD"/>
</dbReference>
<dbReference type="GO" id="GO:0005938">
    <property type="term" value="C:cell cortex"/>
    <property type="evidence" value="ECO:0000250"/>
    <property type="project" value="UniProtKB"/>
</dbReference>
<dbReference type="GO" id="GO:0098978">
    <property type="term" value="C:glutamatergic synapse"/>
    <property type="evidence" value="ECO:0000314"/>
    <property type="project" value="SynGO"/>
</dbReference>
<dbReference type="GO" id="GO:0030426">
    <property type="term" value="C:growth cone"/>
    <property type="evidence" value="ECO:0007669"/>
    <property type="project" value="UniProtKB-SubCell"/>
</dbReference>
<dbReference type="GO" id="GO:0017146">
    <property type="term" value="C:NMDA selective glutamate receptor complex"/>
    <property type="evidence" value="ECO:0000266"/>
    <property type="project" value="RGD"/>
</dbReference>
<dbReference type="GO" id="GO:0005886">
    <property type="term" value="C:plasma membrane"/>
    <property type="evidence" value="ECO:0000318"/>
    <property type="project" value="GO_Central"/>
</dbReference>
<dbReference type="GO" id="GO:0014069">
    <property type="term" value="C:postsynaptic density"/>
    <property type="evidence" value="ECO:0000314"/>
    <property type="project" value="SynGO"/>
</dbReference>
<dbReference type="GO" id="GO:0032587">
    <property type="term" value="C:ruffle membrane"/>
    <property type="evidence" value="ECO:0000250"/>
    <property type="project" value="UniProtKB"/>
</dbReference>
<dbReference type="GO" id="GO:0032420">
    <property type="term" value="C:stereocilium"/>
    <property type="evidence" value="ECO:0000250"/>
    <property type="project" value="UniProtKB"/>
</dbReference>
<dbReference type="GO" id="GO:0032421">
    <property type="term" value="C:stereocilium bundle"/>
    <property type="evidence" value="ECO:0000266"/>
    <property type="project" value="RGD"/>
</dbReference>
<dbReference type="GO" id="GO:0032426">
    <property type="term" value="C:stereocilium tip"/>
    <property type="evidence" value="ECO:0000266"/>
    <property type="project" value="RGD"/>
</dbReference>
<dbReference type="GO" id="GO:0045202">
    <property type="term" value="C:synapse"/>
    <property type="evidence" value="ECO:0000266"/>
    <property type="project" value="RGD"/>
</dbReference>
<dbReference type="GO" id="GO:0003779">
    <property type="term" value="F:actin binding"/>
    <property type="evidence" value="ECO:0000250"/>
    <property type="project" value="UniProtKB"/>
</dbReference>
<dbReference type="GO" id="GO:0031267">
    <property type="term" value="F:small GTPase binding"/>
    <property type="evidence" value="ECO:0000250"/>
    <property type="project" value="UniProtKB"/>
</dbReference>
<dbReference type="GO" id="GO:0051764">
    <property type="term" value="P:actin crosslink formation"/>
    <property type="evidence" value="ECO:0000250"/>
    <property type="project" value="UniProtKB"/>
</dbReference>
<dbReference type="GO" id="GO:0030036">
    <property type="term" value="P:actin cytoskeleton organization"/>
    <property type="evidence" value="ECO:0000266"/>
    <property type="project" value="RGD"/>
</dbReference>
<dbReference type="GO" id="GO:0051017">
    <property type="term" value="P:actin filament bundle assembly"/>
    <property type="evidence" value="ECO:0000250"/>
    <property type="project" value="UniProtKB"/>
</dbReference>
<dbReference type="GO" id="GO:0070358">
    <property type="term" value="P:actin polymerization-dependent cell motility"/>
    <property type="evidence" value="ECO:0000250"/>
    <property type="project" value="UniProtKB"/>
</dbReference>
<dbReference type="GO" id="GO:0008344">
    <property type="term" value="P:adult locomotory behavior"/>
    <property type="evidence" value="ECO:0000266"/>
    <property type="project" value="RGD"/>
</dbReference>
<dbReference type="GO" id="GO:0051016">
    <property type="term" value="P:barbed-end actin filament capping"/>
    <property type="evidence" value="ECO:0000250"/>
    <property type="project" value="UniProtKB"/>
</dbReference>
<dbReference type="GO" id="GO:0048149">
    <property type="term" value="P:behavioral response to ethanol"/>
    <property type="evidence" value="ECO:0000266"/>
    <property type="project" value="RGD"/>
</dbReference>
<dbReference type="GO" id="GO:1990830">
    <property type="term" value="P:cellular response to leukemia inhibitory factor"/>
    <property type="evidence" value="ECO:0000266"/>
    <property type="project" value="RGD"/>
</dbReference>
<dbReference type="GO" id="GO:0036336">
    <property type="term" value="P:dendritic cell migration"/>
    <property type="evidence" value="ECO:0000250"/>
    <property type="project" value="UniProtKB"/>
</dbReference>
<dbReference type="GO" id="GO:0010458">
    <property type="term" value="P:exit from mitosis"/>
    <property type="evidence" value="ECO:0000250"/>
    <property type="project" value="UniProtKB"/>
</dbReference>
<dbReference type="GO" id="GO:1900029">
    <property type="term" value="P:positive regulation of ruffle assembly"/>
    <property type="evidence" value="ECO:0000318"/>
    <property type="project" value="GO_Central"/>
</dbReference>
<dbReference type="GO" id="GO:0016601">
    <property type="term" value="P:Rac protein signal transduction"/>
    <property type="evidence" value="ECO:0000250"/>
    <property type="project" value="UniProtKB"/>
</dbReference>
<dbReference type="GO" id="GO:0030832">
    <property type="term" value="P:regulation of actin filament length"/>
    <property type="evidence" value="ECO:0000250"/>
    <property type="project" value="UniProtKB"/>
</dbReference>
<dbReference type="GO" id="GO:0008360">
    <property type="term" value="P:regulation of cell shape"/>
    <property type="evidence" value="ECO:0000250"/>
    <property type="project" value="UniProtKB"/>
</dbReference>
<dbReference type="GO" id="GO:0099072">
    <property type="term" value="P:regulation of postsynaptic membrane neurotransmitter receptor levels"/>
    <property type="evidence" value="ECO:0000266"/>
    <property type="project" value="RGD"/>
</dbReference>
<dbReference type="GO" id="GO:0035023">
    <property type="term" value="P:regulation of Rho protein signal transduction"/>
    <property type="evidence" value="ECO:0000318"/>
    <property type="project" value="GO_Central"/>
</dbReference>
<dbReference type="GO" id="GO:0007266">
    <property type="term" value="P:Rho protein signal transduction"/>
    <property type="evidence" value="ECO:0000318"/>
    <property type="project" value="GO_Central"/>
</dbReference>
<dbReference type="CDD" id="cd01210">
    <property type="entry name" value="PTB_EPS8"/>
    <property type="match status" value="1"/>
</dbReference>
<dbReference type="CDD" id="cd09540">
    <property type="entry name" value="SAM_EPS8-like"/>
    <property type="match status" value="1"/>
</dbReference>
<dbReference type="CDD" id="cd11764">
    <property type="entry name" value="SH3_Eps8"/>
    <property type="match status" value="1"/>
</dbReference>
<dbReference type="FunFam" id="1.10.150.50:FF:000023">
    <property type="entry name" value="Epidermal growth factor receptor kinase substrate 8"/>
    <property type="match status" value="1"/>
</dbReference>
<dbReference type="FunFam" id="2.30.30.40:FF:000071">
    <property type="entry name" value="Epidermal growth factor receptor kinase substrate 8"/>
    <property type="match status" value="1"/>
</dbReference>
<dbReference type="FunFam" id="2.30.29.30:FF:000174">
    <property type="entry name" value="epidermal growth factor receptor kinase substrate 8"/>
    <property type="match status" value="1"/>
</dbReference>
<dbReference type="Gene3D" id="2.30.29.30">
    <property type="entry name" value="Pleckstrin-homology domain (PH domain)/Phosphotyrosine-binding domain (PTB)"/>
    <property type="match status" value="1"/>
</dbReference>
<dbReference type="Gene3D" id="2.30.30.40">
    <property type="entry name" value="SH3 Domains"/>
    <property type="match status" value="1"/>
</dbReference>
<dbReference type="Gene3D" id="1.10.150.50">
    <property type="entry name" value="Transcription Factor, Ets-1"/>
    <property type="match status" value="1"/>
</dbReference>
<dbReference type="InterPro" id="IPR039801">
    <property type="entry name" value="EPS8-like"/>
</dbReference>
<dbReference type="InterPro" id="IPR055093">
    <property type="entry name" value="EPS8_2nd"/>
</dbReference>
<dbReference type="InterPro" id="IPR033928">
    <property type="entry name" value="EPS8_PTB"/>
</dbReference>
<dbReference type="InterPro" id="IPR035462">
    <property type="entry name" value="Eps8_SH3"/>
</dbReference>
<dbReference type="InterPro" id="IPR011993">
    <property type="entry name" value="PH-like_dom_sf"/>
</dbReference>
<dbReference type="InterPro" id="IPR013625">
    <property type="entry name" value="PTB"/>
</dbReference>
<dbReference type="InterPro" id="IPR006020">
    <property type="entry name" value="PTB/PI_dom"/>
</dbReference>
<dbReference type="InterPro" id="IPR013761">
    <property type="entry name" value="SAM/pointed_sf"/>
</dbReference>
<dbReference type="InterPro" id="IPR041418">
    <property type="entry name" value="SAM_3"/>
</dbReference>
<dbReference type="InterPro" id="IPR036028">
    <property type="entry name" value="SH3-like_dom_sf"/>
</dbReference>
<dbReference type="InterPro" id="IPR001452">
    <property type="entry name" value="SH3_domain"/>
</dbReference>
<dbReference type="PANTHER" id="PTHR12287:SF21">
    <property type="entry name" value="EPIDERMAL GROWTH FACTOR RECEPTOR KINASE SUBSTRATE 8"/>
    <property type="match status" value="1"/>
</dbReference>
<dbReference type="PANTHER" id="PTHR12287">
    <property type="entry name" value="EPIDERMAL GROWTH FACTOR RECEPTOR KINASE SUBSTRATE EPS8-RELATED PROTEIN"/>
    <property type="match status" value="1"/>
</dbReference>
<dbReference type="Pfam" id="PF22975">
    <property type="entry name" value="EPS8_2nd"/>
    <property type="match status" value="1"/>
</dbReference>
<dbReference type="Pfam" id="PF08416">
    <property type="entry name" value="PTB"/>
    <property type="match status" value="1"/>
</dbReference>
<dbReference type="Pfam" id="PF18016">
    <property type="entry name" value="SAM_3"/>
    <property type="match status" value="1"/>
</dbReference>
<dbReference type="Pfam" id="PF00018">
    <property type="entry name" value="SH3_1"/>
    <property type="match status" value="1"/>
</dbReference>
<dbReference type="SMART" id="SM00462">
    <property type="entry name" value="PTB"/>
    <property type="match status" value="1"/>
</dbReference>
<dbReference type="SMART" id="SM00326">
    <property type="entry name" value="SH3"/>
    <property type="match status" value="1"/>
</dbReference>
<dbReference type="SUPFAM" id="SSF50729">
    <property type="entry name" value="PH domain-like"/>
    <property type="match status" value="1"/>
</dbReference>
<dbReference type="SUPFAM" id="SSF50044">
    <property type="entry name" value="SH3-domain"/>
    <property type="match status" value="1"/>
</dbReference>
<dbReference type="PROSITE" id="PS50002">
    <property type="entry name" value="SH3"/>
    <property type="match status" value="1"/>
</dbReference>
<keyword id="KW-0009">Actin-binding</keyword>
<keyword id="KW-1003">Cell membrane</keyword>
<keyword id="KW-0966">Cell projection</keyword>
<keyword id="KW-0963">Cytoplasm</keyword>
<keyword id="KW-0472">Membrane</keyword>
<keyword id="KW-0597">Phosphoprotein</keyword>
<keyword id="KW-1185">Reference proteome</keyword>
<keyword id="KW-0728">SH3 domain</keyword>
<keyword id="KW-0770">Synapse</keyword>
<keyword id="KW-0771">Synaptosome</keyword>
<keyword id="KW-0832">Ubl conjugation</keyword>
<accession>F1M3L7</accession>
<reference key="1">
    <citation type="journal article" date="2004" name="Nature">
        <title>Genome sequence of the Brown Norway rat yields insights into mammalian evolution.</title>
        <authorList>
            <person name="Gibbs R.A."/>
            <person name="Weinstock G.M."/>
            <person name="Metzker M.L."/>
            <person name="Muzny D.M."/>
            <person name="Sodergren E.J."/>
            <person name="Scherer S."/>
            <person name="Scott G."/>
            <person name="Steffen D."/>
            <person name="Worley K.C."/>
            <person name="Burch P.E."/>
            <person name="Okwuonu G."/>
            <person name="Hines S."/>
            <person name="Lewis L."/>
            <person name="Deramo C."/>
            <person name="Delgado O."/>
            <person name="Dugan-Rocha S."/>
            <person name="Miner G."/>
            <person name="Morgan M."/>
            <person name="Hawes A."/>
            <person name="Gill R."/>
            <person name="Holt R.A."/>
            <person name="Adams M.D."/>
            <person name="Amanatides P.G."/>
            <person name="Baden-Tillson H."/>
            <person name="Barnstead M."/>
            <person name="Chin S."/>
            <person name="Evans C.A."/>
            <person name="Ferriera S."/>
            <person name="Fosler C."/>
            <person name="Glodek A."/>
            <person name="Gu Z."/>
            <person name="Jennings D."/>
            <person name="Kraft C.L."/>
            <person name="Nguyen T."/>
            <person name="Pfannkoch C.M."/>
            <person name="Sitter C."/>
            <person name="Sutton G.G."/>
            <person name="Venter J.C."/>
            <person name="Woodage T."/>
            <person name="Smith D."/>
            <person name="Lee H.-M."/>
            <person name="Gustafson E."/>
            <person name="Cahill P."/>
            <person name="Kana A."/>
            <person name="Doucette-Stamm L."/>
            <person name="Weinstock K."/>
            <person name="Fechtel K."/>
            <person name="Weiss R.B."/>
            <person name="Dunn D.M."/>
            <person name="Green E.D."/>
            <person name="Blakesley R.W."/>
            <person name="Bouffard G.G."/>
            <person name="De Jong P.J."/>
            <person name="Osoegawa K."/>
            <person name="Zhu B."/>
            <person name="Marra M."/>
            <person name="Schein J."/>
            <person name="Bosdet I."/>
            <person name="Fjell C."/>
            <person name="Jones S."/>
            <person name="Krzywinski M."/>
            <person name="Mathewson C."/>
            <person name="Siddiqui A."/>
            <person name="Wye N."/>
            <person name="McPherson J."/>
            <person name="Zhao S."/>
            <person name="Fraser C.M."/>
            <person name="Shetty J."/>
            <person name="Shatsman S."/>
            <person name="Geer K."/>
            <person name="Chen Y."/>
            <person name="Abramzon S."/>
            <person name="Nierman W.C."/>
            <person name="Havlak P.H."/>
            <person name="Chen R."/>
            <person name="Durbin K.J."/>
            <person name="Egan A."/>
            <person name="Ren Y."/>
            <person name="Song X.-Z."/>
            <person name="Li B."/>
            <person name="Liu Y."/>
            <person name="Qin X."/>
            <person name="Cawley S."/>
            <person name="Cooney A.J."/>
            <person name="D'Souza L.M."/>
            <person name="Martin K."/>
            <person name="Wu J.Q."/>
            <person name="Gonzalez-Garay M.L."/>
            <person name="Jackson A.R."/>
            <person name="Kalafus K.J."/>
            <person name="McLeod M.P."/>
            <person name="Milosavljevic A."/>
            <person name="Virk D."/>
            <person name="Volkov A."/>
            <person name="Wheeler D.A."/>
            <person name="Zhang Z."/>
            <person name="Bailey J.A."/>
            <person name="Eichler E.E."/>
            <person name="Tuzun E."/>
            <person name="Birney E."/>
            <person name="Mongin E."/>
            <person name="Ureta-Vidal A."/>
            <person name="Woodwark C."/>
            <person name="Zdobnov E."/>
            <person name="Bork P."/>
            <person name="Suyama M."/>
            <person name="Torrents D."/>
            <person name="Alexandersson M."/>
            <person name="Trask B.J."/>
            <person name="Young J.M."/>
            <person name="Huang H."/>
            <person name="Wang H."/>
            <person name="Xing H."/>
            <person name="Daniels S."/>
            <person name="Gietzen D."/>
            <person name="Schmidt J."/>
            <person name="Stevens K."/>
            <person name="Vitt U."/>
            <person name="Wingrove J."/>
            <person name="Camara F."/>
            <person name="Mar Alba M."/>
            <person name="Abril J.F."/>
            <person name="Guigo R."/>
            <person name="Smit A."/>
            <person name="Dubchak I."/>
            <person name="Rubin E.M."/>
            <person name="Couronne O."/>
            <person name="Poliakov A."/>
            <person name="Huebner N."/>
            <person name="Ganten D."/>
            <person name="Goesele C."/>
            <person name="Hummel O."/>
            <person name="Kreitler T."/>
            <person name="Lee Y.-A."/>
            <person name="Monti J."/>
            <person name="Schulz H."/>
            <person name="Zimdahl H."/>
            <person name="Himmelbauer H."/>
            <person name="Lehrach H."/>
            <person name="Jacob H.J."/>
            <person name="Bromberg S."/>
            <person name="Gullings-Handley J."/>
            <person name="Jensen-Seaman M.I."/>
            <person name="Kwitek A.E."/>
            <person name="Lazar J."/>
            <person name="Pasko D."/>
            <person name="Tonellato P.J."/>
            <person name="Twigger S."/>
            <person name="Ponting C.P."/>
            <person name="Duarte J.M."/>
            <person name="Rice S."/>
            <person name="Goodstadt L."/>
            <person name="Beatson S.A."/>
            <person name="Emes R.D."/>
            <person name="Winter E.E."/>
            <person name="Webber C."/>
            <person name="Brandt P."/>
            <person name="Nyakatura G."/>
            <person name="Adetobi M."/>
            <person name="Chiaromonte F."/>
            <person name="Elnitski L."/>
            <person name="Eswara P."/>
            <person name="Hardison R.C."/>
            <person name="Hou M."/>
            <person name="Kolbe D."/>
            <person name="Makova K."/>
            <person name="Miller W."/>
            <person name="Nekrutenko A."/>
            <person name="Riemer C."/>
            <person name="Schwartz S."/>
            <person name="Taylor J."/>
            <person name="Yang S."/>
            <person name="Zhang Y."/>
            <person name="Lindpaintner K."/>
            <person name="Andrews T.D."/>
            <person name="Caccamo M."/>
            <person name="Clamp M."/>
            <person name="Clarke L."/>
            <person name="Curwen V."/>
            <person name="Durbin R.M."/>
            <person name="Eyras E."/>
            <person name="Searle S.M."/>
            <person name="Cooper G.M."/>
            <person name="Batzoglou S."/>
            <person name="Brudno M."/>
            <person name="Sidow A."/>
            <person name="Stone E.A."/>
            <person name="Payseur B.A."/>
            <person name="Bourque G."/>
            <person name="Lopez-Otin C."/>
            <person name="Puente X.S."/>
            <person name="Chakrabarti K."/>
            <person name="Chatterji S."/>
            <person name="Dewey C."/>
            <person name="Pachter L."/>
            <person name="Bray N."/>
            <person name="Yap V.B."/>
            <person name="Caspi A."/>
            <person name="Tesler G."/>
            <person name="Pevzner P.A."/>
            <person name="Haussler D."/>
            <person name="Roskin K.M."/>
            <person name="Baertsch R."/>
            <person name="Clawson H."/>
            <person name="Furey T.S."/>
            <person name="Hinrichs A.S."/>
            <person name="Karolchik D."/>
            <person name="Kent W.J."/>
            <person name="Rosenbloom K.R."/>
            <person name="Trumbower H."/>
            <person name="Weirauch M."/>
            <person name="Cooper D.N."/>
            <person name="Stenson P.D."/>
            <person name="Ma B."/>
            <person name="Brent M."/>
            <person name="Arumugam M."/>
            <person name="Shteynberg D."/>
            <person name="Copley R.R."/>
            <person name="Taylor M.S."/>
            <person name="Riethman H."/>
            <person name="Mudunuri U."/>
            <person name="Peterson J."/>
            <person name="Guyer M."/>
            <person name="Felsenfeld A."/>
            <person name="Old S."/>
            <person name="Mockrin S."/>
            <person name="Collins F.S."/>
        </authorList>
    </citation>
    <scope>NUCLEOTIDE SEQUENCE [LARGE SCALE GENOMIC DNA]</scope>
    <source>
        <strain>Brown Norway</strain>
    </source>
</reference>
<reference key="2">
    <citation type="journal article" date="2006" name="Proc. Natl. Acad. Sci. U.S.A.">
        <title>Quantitative phosphoproteomics of vasopressin-sensitive renal cells: regulation of aquaporin-2 phosphorylation at two sites.</title>
        <authorList>
            <person name="Hoffert J.D."/>
            <person name="Pisitkun T."/>
            <person name="Wang G."/>
            <person name="Shen R.-F."/>
            <person name="Knepper M.A."/>
        </authorList>
    </citation>
    <scope>PHOSPHORYLATION [LARGE SCALE ANALYSIS] AT THR-317</scope>
    <scope>IDENTIFICATION BY MASS SPECTROMETRY [LARGE SCALE ANALYSIS]</scope>
</reference>
<reference key="3">
    <citation type="journal article" date="2007" name="EMBO J.">
        <title>Abelson interacting protein 1 (Abi-1) is essential for dendrite morphogenesis and synapse formation.</title>
        <authorList>
            <person name="Proepper C."/>
            <person name="Johannsen S."/>
            <person name="Liebau S."/>
            <person name="Dahl J."/>
            <person name="Vaida B."/>
            <person name="Bockmann J."/>
            <person name="Kreutz M.R."/>
            <person name="Gundelfinger E.D."/>
            <person name="Boeckers T.M."/>
        </authorList>
    </citation>
    <scope>INTERACTION WITH ABI1</scope>
    <scope>SUBCELLULAR LOCATION</scope>
    <scope>TISSUE SPECIFICITY</scope>
</reference>
<reference key="4">
    <citation type="journal article" date="2009" name="PLoS Biol.">
        <title>Eps8 regulates axonal filopodia in hippocampal neurons in response to brain-derived neurotrophic factor (BDNF).</title>
        <authorList>
            <person name="Menna E."/>
            <person name="Disanza A."/>
            <person name="Cagnoli C."/>
            <person name="Schenk U."/>
            <person name="Gelsomino G."/>
            <person name="Frittoli E."/>
            <person name="Hertzog M."/>
            <person name="Offenhauser N."/>
            <person name="Sawallisch C."/>
            <person name="Kreienkamp H.J."/>
            <person name="Gertler F.B."/>
            <person name="Di Fiore P.P."/>
            <person name="Scita G."/>
            <person name="Matteoli M."/>
        </authorList>
    </citation>
    <scope>SUBCELLULAR LOCATION</scope>
    <scope>TISSUE SPECIFICITY</scope>
</reference>
<reference key="5">
    <citation type="journal article" date="2012" name="Nat. Commun.">
        <title>Quantitative maps of protein phosphorylation sites across 14 different rat organs and tissues.</title>
        <authorList>
            <person name="Lundby A."/>
            <person name="Secher A."/>
            <person name="Lage K."/>
            <person name="Nordsborg N.B."/>
            <person name="Dmytriyev A."/>
            <person name="Lundby C."/>
            <person name="Olsen J.V."/>
        </authorList>
    </citation>
    <scope>PHOSPHORYLATION [LARGE SCALE ANALYSIS] AT SER-58; THR-317; SER-659 AND SER-685</scope>
    <scope>IDENTIFICATION BY MASS SPECTROMETRY [LARGE SCALE ANALYSIS]</scope>
</reference>
<comment type="function">
    <text evidence="1">Signaling adapter that controls various cellular protrusions by regulating actin cytoskeleton dynamics and architecture. Depending on its association with other signal transducers, can regulate different processes. Together with SOS1 and ABI1, forms a trimeric complex that participates in transduction of signals from Ras to Rac by activating the Rac-specific guanine nucleotide exchange factor (GEF) activity. Acts as a direct regulator of actin dynamics by binding actin filaments and has both barbed-end actin filament capping and actin bundling activities depending on the context. Displays barbed-end actin capping activity when associated with ABI1, thereby regulating actin-based motility process: capping activity is auto-inhibited and inhibition is relieved upon ABI1 interaction. Also shows actin bundling activity when associated with BAIAP2, enhancing BAIAP2-dependent membrane extensions and promoting filopodial protrusions. Involved in the regulation of processes such as axonal filopodia growth, stereocilia length, dendritic cell migration and cancer cell migration and invasion. Acts as a regulator of axonal filopodia formation in neurons: in the absence of neurotrophic factors, negatively regulates axonal filopodia formation via actin-capping activity. In contrast, it is phosphorylated in the presence of BDNF leading to inhibition of its actin-capping activity and stimulation of filopodia formation. Component of a complex with WHRN and MYO15A that localizes at stereocilia tips and is required for elongation of the stereocilia actin core. Indirectly involved in cell cycle progression; its degradation following ubiquitination being required during G2 phase to promote cell shape changes (By similarity).</text>
</comment>
<comment type="subunit">
    <text evidence="7">Homodimer. Part of a complex consisting of ABI1, EPS8 and SOS1. Interacts with BAIAP2. Interacts with SHB and LANCL1. Interacts with EGFR; mediates EPS8 phosphorylation. Interacts with MYO15A and WHRN.</text>
</comment>
<comment type="subcellular location">
    <subcellularLocation>
        <location>Synapse</location>
        <location>Synaptosome</location>
    </subcellularLocation>
    <subcellularLocation>
        <location evidence="1">Cytoplasm</location>
        <location evidence="1">Cell cortex</location>
    </subcellularLocation>
    <subcellularLocation>
        <location evidence="1">Cell projection</location>
        <location evidence="1">Ruffle membrane</location>
    </subcellularLocation>
    <subcellularLocation>
        <location evidence="1 2">Cell projection</location>
        <location evidence="1 2">Stereocilium</location>
    </subcellularLocation>
    <subcellularLocation>
        <location>Cell projection</location>
        <location>Growth cone</location>
    </subcellularLocation>
    <text evidence="1 2">Localizes at the tips of the stereocilia of the inner and outer hair cells (By similarity). Localizes to the midzone of dividing cells.</text>
</comment>
<comment type="tissue specificity">
    <text evidence="7 8">Expressed in neuronal cell body and neurites, and prominently enriched in the axonal growth cone.</text>
</comment>
<comment type="domain">
    <text evidence="1">The effector region is required for activating the Rac-specific guanine nucleotide exchange factor (GEF) activity. It mediates both barbed-end actin capping and actin bundling activities. The capping activity is mediated by an amphipathic helix that binds within the hydrophobic pocket at the barbed ends of actin blocking further addition of actin monomers, while the bundling activity is mediated by a compact 4 helix bundle, which contacts 3 actin subunits along the filament (By similarity).</text>
</comment>
<comment type="domain">
    <text evidence="1">The SH3 domain mediates interaction with SHB.</text>
</comment>
<comment type="PTM">
    <text evidence="1">Ubiquitinated by the SCF(FBXW5) E3 ubiquitin-protein ligase complex during G2 phase, leading to its transient degradation and subsequent cell shape changes required to allow mitotic progression. Reappears at the midzone of dividing cells (By similarity).</text>
</comment>
<comment type="PTM">
    <text evidence="1">Phosphorylation at Ser-625 and Thr-629 by MAPK following BDNF treatment promotes removal from actin and filopodia formation. Phosphorylated by several receptor tyrosine kinases (By similarity).</text>
</comment>
<comment type="similarity">
    <text evidence="9">Belongs to the EPS8 family.</text>
</comment>
<name>EPS8_RAT</name>
<sequence>MNGHMSNHSSGYGIYPSQMNGYGSSPPYSQMDREHCSRTSAKALYEQRKNYARDSVSSVSDVSQYRVEHLTTFVLDRKDAMITVDDGIRKLKLLDAKGKVWTQDMILQVDDRAVSLIDLESKNELENFPLNTIQHCQAVAHTCSYDSILALVCKEPTQNKPDLHLFQCDEVKANLISEDIESAISDSKGGKQKRRPEALRMIAKADPGIPPPPRAPAPVPPGTVTQVDVRSRVAAWSAWAADQGDFEKPRQYHEQEETPEMMAARIDRDVQILNHILDDIEFFITKLQKAAEAFSELSKRKKSKKSKRKGPGEGVLTLRAKPPPPDEFVDCFQKFKHGFNLLAKLKSHIQNPSASDLVHFLFTPLNMVVQATGGPELASSVLSPLLTKDTVDFLNYTVKAEERQLWMSLGETWMKVRAEWPKEQFIPPYVPRFRNGWEPPMLNFMGAPTEQDMYQLAESVANAAEQQRKQDSKRQSTEHSSMSDYPPADGYTFSNSMYHRGPHVDQGEAALALKSTPNRHVDRNYDPVKTQPKKYAKSKYDFVARNSSELSVMKDDVLEILDDRKQWWKVRNASGDSGFVPNNILDIMRTPESGVGRTDPPYTHTIQKQRTEYGPRSADTPSAPSPPPTPAPVPVPLPPSAPAPVPVPKVPANVTRQNSSSSESGGSIARDSQRYKQLPVDRRKSQMEEVQDELFQRLTIGRSAAQRKFHVPRQNVPVINITYDSSPEEVKTWLQSKGFNPVTVSSLGVLNGAQLFSLNKDELRSVCPEGARVFSQITVQKAALEDSSGSSELQEIMRRRQEKISAAASDSGVESFDEGSSH</sequence>
<protein>
    <recommendedName>
        <fullName>Epidermal growth factor receptor kinase substrate 8</fullName>
    </recommendedName>
</protein>
<proteinExistence type="evidence at protein level"/>
<gene>
    <name type="primary">Eps8</name>
</gene>
<evidence type="ECO:0000250" key="1"/>
<evidence type="ECO:0000250" key="2">
    <source>
        <dbReference type="UniProtKB" id="Q08509"/>
    </source>
</evidence>
<evidence type="ECO:0000250" key="3">
    <source>
        <dbReference type="UniProtKB" id="Q12929"/>
    </source>
</evidence>
<evidence type="ECO:0000255" key="4"/>
<evidence type="ECO:0000255" key="5">
    <source>
        <dbReference type="PROSITE-ProRule" id="PRU00192"/>
    </source>
</evidence>
<evidence type="ECO:0000256" key="6">
    <source>
        <dbReference type="SAM" id="MobiDB-lite"/>
    </source>
</evidence>
<evidence type="ECO:0000269" key="7">
    <source>
    </source>
</evidence>
<evidence type="ECO:0000269" key="8">
    <source>
    </source>
</evidence>
<evidence type="ECO:0000305" key="9"/>
<evidence type="ECO:0007744" key="10">
    <source>
    </source>
</evidence>
<evidence type="ECO:0007744" key="11">
    <source>
    </source>
</evidence>
<feature type="chain" id="PRO_0000421990" description="Epidermal growth factor receptor kinase substrate 8">
    <location>
        <begin position="1"/>
        <end position="822"/>
    </location>
</feature>
<feature type="domain" description="PTB" evidence="4">
    <location>
        <begin position="64"/>
        <end position="194"/>
    </location>
</feature>
<feature type="domain" description="SH3" evidence="5">
    <location>
        <begin position="531"/>
        <end position="590"/>
    </location>
</feature>
<feature type="region of interest" description="Disordered" evidence="6">
    <location>
        <begin position="204"/>
        <end position="224"/>
    </location>
</feature>
<feature type="region of interest" description="Disordered" evidence="6">
    <location>
        <begin position="295"/>
        <end position="320"/>
    </location>
</feature>
<feature type="region of interest" description="Disordered" evidence="6">
    <location>
        <begin position="460"/>
        <end position="487"/>
    </location>
</feature>
<feature type="region of interest" description="Disordered" evidence="6">
    <location>
        <begin position="608"/>
        <end position="685"/>
    </location>
</feature>
<feature type="region of interest" description="Effector region" evidence="1">
    <location>
        <begin position="649"/>
        <end position="822"/>
    </location>
</feature>
<feature type="region of interest" description="Amphipathic helix" evidence="1">
    <location>
        <begin position="680"/>
        <end position="698"/>
    </location>
</feature>
<feature type="region of interest" description="Helix bundle 1" evidence="1">
    <location>
        <begin position="718"/>
        <end position="738"/>
    </location>
</feature>
<feature type="region of interest" description="Helix bundle 2" evidence="1">
    <location>
        <begin position="752"/>
        <end position="757"/>
    </location>
</feature>
<feature type="region of interest" description="Helix bundle 3" evidence="1">
    <location>
        <begin position="762"/>
        <end position="767"/>
    </location>
</feature>
<feature type="region of interest" description="Helix bundle 4" evidence="1">
    <location>
        <begin position="766"/>
        <end position="785"/>
    </location>
</feature>
<feature type="region of interest" description="Disordered" evidence="6">
    <location>
        <begin position="787"/>
        <end position="822"/>
    </location>
</feature>
<feature type="compositionally biased region" description="Pro residues" evidence="6">
    <location>
        <begin position="208"/>
        <end position="221"/>
    </location>
</feature>
<feature type="compositionally biased region" description="Basic residues" evidence="6">
    <location>
        <begin position="299"/>
        <end position="309"/>
    </location>
</feature>
<feature type="compositionally biased region" description="Basic and acidic residues" evidence="6">
    <location>
        <begin position="466"/>
        <end position="477"/>
    </location>
</feature>
<feature type="compositionally biased region" description="Pro residues" evidence="6">
    <location>
        <begin position="623"/>
        <end position="649"/>
    </location>
</feature>
<feature type="compositionally biased region" description="Basic and acidic residues" evidence="6">
    <location>
        <begin position="671"/>
        <end position="685"/>
    </location>
</feature>
<feature type="modified residue" description="Phosphoserine" evidence="11">
    <location>
        <position position="58"/>
    </location>
</feature>
<feature type="modified residue" description="Phosphothreonine" evidence="3">
    <location>
        <position position="223"/>
    </location>
</feature>
<feature type="modified residue" description="Phosphothreonine" evidence="10 11">
    <location>
        <position position="317"/>
    </location>
</feature>
<feature type="modified residue" description="Phosphoserine" evidence="3">
    <location>
        <position position="476"/>
    </location>
</feature>
<feature type="modified residue" description="Phosphoserine; by MAPK" evidence="2">
    <location>
        <position position="625"/>
    </location>
</feature>
<feature type="modified residue" description="Phosphothreonine; by MAPK" evidence="2">
    <location>
        <position position="629"/>
    </location>
</feature>
<feature type="modified residue" description="Phosphoserine" evidence="11">
    <location>
        <position position="659"/>
    </location>
</feature>
<feature type="modified residue" description="Phosphoserine" evidence="2">
    <location>
        <position position="662"/>
    </location>
</feature>
<feature type="modified residue" description="Phosphoserine" evidence="11">
    <location>
        <position position="685"/>
    </location>
</feature>
<feature type="modified residue" description="Phosphoserine" evidence="2">
    <location>
        <position position="811"/>
    </location>
</feature>
<feature type="modified residue" description="Phosphoserine" evidence="2">
    <location>
        <position position="815"/>
    </location>
</feature>